<reference key="1">
    <citation type="unpublished observations" date="1993-05">
        <authorList>
            <person name="Bouffard G.G."/>
            <person name="Ogihara N."/>
            <person name="Rudd K.E."/>
            <person name="Adhya S.L."/>
        </authorList>
    </citation>
    <scope>NUCLEOTIDE SEQUENCE [GENOMIC DNA]</scope>
    <source>
        <strain>K12</strain>
    </source>
</reference>
<reference key="2">
    <citation type="journal article" date="1996" name="DNA Res.">
        <title>A 718-kb DNA sequence of the Escherichia coli K-12 genome corresponding to the 12.7-28.0 min region on the linkage map.</title>
        <authorList>
            <person name="Oshima T."/>
            <person name="Aiba H."/>
            <person name="Baba T."/>
            <person name="Fujita K."/>
            <person name="Hayashi K."/>
            <person name="Honjo A."/>
            <person name="Ikemoto K."/>
            <person name="Inada T."/>
            <person name="Itoh T."/>
            <person name="Kajihara M."/>
            <person name="Kanai K."/>
            <person name="Kashimoto K."/>
            <person name="Kimura S."/>
            <person name="Kitagawa M."/>
            <person name="Makino K."/>
            <person name="Masuda S."/>
            <person name="Miki T."/>
            <person name="Mizobuchi K."/>
            <person name="Mori H."/>
            <person name="Motomura K."/>
            <person name="Nakamura Y."/>
            <person name="Nashimoto H."/>
            <person name="Nishio Y."/>
            <person name="Saito N."/>
            <person name="Sampei G."/>
            <person name="Seki Y."/>
            <person name="Tagami H."/>
            <person name="Takemoto K."/>
            <person name="Wada C."/>
            <person name="Yamamoto Y."/>
            <person name="Yano M."/>
            <person name="Horiuchi T."/>
        </authorList>
    </citation>
    <scope>NUCLEOTIDE SEQUENCE [LARGE SCALE GENOMIC DNA]</scope>
    <source>
        <strain>K12 / W3110 / ATCC 27325 / DSM 5911</strain>
    </source>
</reference>
<reference key="3">
    <citation type="journal article" date="1997" name="Science">
        <title>The complete genome sequence of Escherichia coli K-12.</title>
        <authorList>
            <person name="Blattner F.R."/>
            <person name="Plunkett G. III"/>
            <person name="Bloch C.A."/>
            <person name="Perna N.T."/>
            <person name="Burland V."/>
            <person name="Riley M."/>
            <person name="Collado-Vides J."/>
            <person name="Glasner J.D."/>
            <person name="Rode C.K."/>
            <person name="Mayhew G.F."/>
            <person name="Gregor J."/>
            <person name="Davis N.W."/>
            <person name="Kirkpatrick H.A."/>
            <person name="Goeden M.A."/>
            <person name="Rose D.J."/>
            <person name="Mau B."/>
            <person name="Shao Y."/>
        </authorList>
    </citation>
    <scope>NUCLEOTIDE SEQUENCE [LARGE SCALE GENOMIC DNA]</scope>
    <source>
        <strain>K12 / MG1655 / ATCC 47076</strain>
    </source>
</reference>
<reference key="4">
    <citation type="journal article" date="2006" name="Mol. Syst. Biol.">
        <title>Highly accurate genome sequences of Escherichia coli K-12 strains MG1655 and W3110.</title>
        <authorList>
            <person name="Hayashi K."/>
            <person name="Morooka N."/>
            <person name="Yamamoto Y."/>
            <person name="Fujita K."/>
            <person name="Isono K."/>
            <person name="Choi S."/>
            <person name="Ohtsubo E."/>
            <person name="Baba T."/>
            <person name="Wanner B.L."/>
            <person name="Mori H."/>
            <person name="Horiuchi T."/>
        </authorList>
    </citation>
    <scope>NUCLEOTIDE SEQUENCE [LARGE SCALE GENOMIC DNA]</scope>
    <source>
        <strain>K12 / W3110 / ATCC 27325 / DSM 5911</strain>
    </source>
</reference>
<reference key="5">
    <citation type="journal article" date="1982" name="Nucleic Acids Res.">
        <title>The nucleotide sequence of aroG, the gene for 3-deoxy-D-arabinoheptulosonate-7-phosphate synthetase (phe) in Escherichia coli K12.</title>
        <authorList>
            <person name="Davies W.D."/>
            <person name="Davidson B.E."/>
        </authorList>
    </citation>
    <scope>PRELIMINARY NUCLEOTIDE SEQUENCE [GENOMIC DNA] OF 122-250</scope>
    <source>
        <strain>K12</strain>
    </source>
</reference>
<reference key="6">
    <citation type="journal article" date="1997" name="Electrophoresis">
        <title>Comparing the predicted and observed properties of proteins encoded in the genome of Escherichia coli K-12.</title>
        <authorList>
            <person name="Link A.J."/>
            <person name="Robison K."/>
            <person name="Church G.M."/>
        </authorList>
    </citation>
    <scope>PROTEIN SEQUENCE OF 2-20</scope>
    <source>
        <strain>K12 / EMG2</strain>
    </source>
</reference>
<reference key="7">
    <citation type="submission" date="1994-09" db="UniProtKB">
        <authorList>
            <person name="Pasquali C."/>
            <person name="Sanchez J.-C."/>
            <person name="Ravier F."/>
            <person name="Golaz O."/>
            <person name="Hughes G.J."/>
            <person name="Frutiger S."/>
            <person name="Paquet N."/>
            <person name="Wilkins M."/>
            <person name="Appel R.D."/>
            <person name="Bairoch A."/>
            <person name="Hochstrasser D.F."/>
        </authorList>
    </citation>
    <scope>PROTEIN SEQUENCE OF 2-11</scope>
    <source>
        <strain>K12 / W3110 / ATCC 27325 / DSM 5911</strain>
    </source>
</reference>
<reference key="8">
    <citation type="journal article" date="1996" name="EMBO J.">
        <title>Bacterial defense against aging: role of the Escherichia coli ArcA regulator in gene expression, readjusted energy flux and survival during stasis.</title>
        <authorList>
            <person name="Nystroem T."/>
            <person name="Larsson C."/>
            <person name="Gustafsson L."/>
        </authorList>
    </citation>
    <scope>PROTEIN SEQUENCE OF 2-11</scope>
</reference>
<reference key="9">
    <citation type="journal article" date="1998" name="J. Mol. Biol.">
        <title>Protein identification with N and C-terminal sequence tags in proteome projects.</title>
        <authorList>
            <person name="Wilkins M.R."/>
            <person name="Gasteiger E."/>
            <person name="Tonella L."/>
            <person name="Ou K."/>
            <person name="Tyler M."/>
            <person name="Sanchez J.-C."/>
            <person name="Gooley A.A."/>
            <person name="Walsh B.J."/>
            <person name="Bairoch A."/>
            <person name="Appel R.D."/>
            <person name="Williams K.L."/>
            <person name="Hochstrasser D.F."/>
        </authorList>
    </citation>
    <scope>PROTEIN SEQUENCE OF 2-5</scope>
    <source>
        <strain>K12 / W3110 / ATCC 27325 / DSM 5911</strain>
    </source>
</reference>
<reference key="10">
    <citation type="journal article" date="1997" name="Electrophoresis">
        <title>Escherichia coli proteome analysis using the gene-protein database.</title>
        <authorList>
            <person name="VanBogelen R.A."/>
            <person name="Abshire K.Z."/>
            <person name="Moldover B."/>
            <person name="Olson E.R."/>
            <person name="Neidhardt F.C."/>
        </authorList>
    </citation>
    <scope>IDENTIFICATION BY 2D-GEL</scope>
</reference>
<reference key="11">
    <citation type="journal article" date="1999" name="FEBS Lett.">
        <title>The two analogous phosphoglycerate mutases of Escherichia coli.</title>
        <authorList>
            <person name="Fraser H.I."/>
            <person name="Kvaratskhelia M."/>
            <person name="White M.F."/>
        </authorList>
    </citation>
    <scope>FUNCTION</scope>
    <scope>CATALYTIC ACTIVITY</scope>
    <scope>BIOPHYSICOCHEMICAL PROPERTIES</scope>
    <scope>ACTIVITY REGULATION</scope>
    <scope>DEVELOPMENTAL STAGE</scope>
    <scope>SUBUNIT</scope>
</reference>
<reference key="12">
    <citation type="journal article" date="2000" name="Microbiology">
        <title>A method for direct cloning of Fur-regulated genes: identification of seven new Fur-regulated loci in Escherichia coli.</title>
        <authorList>
            <person name="Vassinova N."/>
            <person name="Kozyrev D."/>
        </authorList>
    </citation>
    <scope>INDUCTION</scope>
</reference>
<reference key="13">
    <citation type="journal article" date="2009" name="Mol. Cell. Proteomics">
        <title>Lysine acetylation is a highly abundant and evolutionarily conserved modification in Escherichia coli.</title>
        <authorList>
            <person name="Zhang J."/>
            <person name="Sprung R."/>
            <person name="Pei J."/>
            <person name="Tan X."/>
            <person name="Kim S."/>
            <person name="Zhu H."/>
            <person name="Liu C.F."/>
            <person name="Grishin N.V."/>
            <person name="Zhao Y."/>
        </authorList>
    </citation>
    <scope>ACETYLATION [LARGE SCALE ANALYSIS] AT LYS-18; LYS-100 AND LYS-106</scope>
    <scope>IDENTIFICATION BY MASS SPECTROMETRY</scope>
    <source>
        <strain>K12 / JW1106</strain>
        <strain>K12 / MG1655 / ATCC 47076</strain>
    </source>
</reference>
<reference key="14">
    <citation type="journal article" date="2001" name="J. Biol. Chem.">
        <title>High resolution structure of the phosphohistidine-activated form of Escherichia coli cofactor-dependent phosphoglycerate mutase.</title>
        <authorList>
            <person name="Bond C.S."/>
            <person name="White M.F."/>
            <person name="Hunter W.N."/>
        </authorList>
    </citation>
    <scope>X-RAY CRYSTALLOGRAPHY (1.25 ANGSTROMS) IN COMPLEX WITH SUBSTRATE ANALOG</scope>
    <scope>ACTIVE SITE</scope>
    <scope>SUBUNIT</scope>
    <source>
        <strain>K12</strain>
    </source>
</reference>
<reference key="15">
    <citation type="journal article" date="2002" name="J. Mol. Biol.">
        <title>Mechanistic implications for Escherichia coli cofactor-dependent phosphoglycerate mutase based on the high-resolution crystal structure of a vanadate complex.</title>
        <authorList>
            <person name="Bond C.S."/>
            <person name="White M.F."/>
            <person name="Hunter W.N."/>
        </authorList>
    </citation>
    <scope>X-RAY CRYSTALLOGRAPHY (1.3 ANGSTROMS) IN COMPLEX WITH VANADATE</scope>
    <scope>SUBUNIT</scope>
    <scope>ACTIVE SITE</scope>
</reference>
<feature type="initiator methionine" description="Removed" evidence="8 9 10 11">
    <location>
        <position position="1"/>
    </location>
</feature>
<feature type="chain" id="PRO_0000179873" description="2,3-bisphosphoglycerate-dependent phosphoglycerate mutase">
    <location>
        <begin position="2"/>
        <end position="250"/>
    </location>
</feature>
<feature type="active site" description="Tele-phosphohistidine intermediate" evidence="2 4 6">
    <location>
        <position position="11"/>
    </location>
</feature>
<feature type="active site" description="Proton donor/acceptor" evidence="2 4 6">
    <location>
        <position position="89"/>
    </location>
</feature>
<feature type="binding site" evidence="2 6">
    <location>
        <begin position="10"/>
        <end position="17"/>
    </location>
    <ligand>
        <name>substrate</name>
    </ligand>
</feature>
<feature type="binding site" evidence="2 4 6">
    <location>
        <begin position="23"/>
        <end position="24"/>
    </location>
    <ligand>
        <name>substrate</name>
    </ligand>
</feature>
<feature type="binding site" evidence="1 2">
    <location>
        <position position="62"/>
    </location>
    <ligand>
        <name>substrate</name>
    </ligand>
</feature>
<feature type="binding site" evidence="2 6">
    <location>
        <begin position="89"/>
        <end position="92"/>
    </location>
    <ligand>
        <name>substrate</name>
    </ligand>
</feature>
<feature type="binding site" evidence="2 6">
    <location>
        <position position="100"/>
    </location>
    <ligand>
        <name>substrate</name>
    </ligand>
</feature>
<feature type="binding site" evidence="2 4 6">
    <location>
        <begin position="116"/>
        <end position="117"/>
    </location>
    <ligand>
        <name>substrate</name>
    </ligand>
</feature>
<feature type="binding site" evidence="2 6">
    <location>
        <begin position="185"/>
        <end position="186"/>
    </location>
    <ligand>
        <name>substrate</name>
    </ligand>
</feature>
<feature type="site" description="Transition state stabilizer" evidence="2 4">
    <location>
        <position position="184"/>
    </location>
</feature>
<feature type="modified residue" description="N6-acetyllysine" evidence="7">
    <location>
        <position position="18"/>
    </location>
</feature>
<feature type="modified residue" description="N6-acetyllysine" evidence="7">
    <location>
        <position position="100"/>
    </location>
</feature>
<feature type="modified residue" description="N6-acetyllysine" evidence="7">
    <location>
        <position position="106"/>
    </location>
</feature>
<feature type="strand" evidence="13">
    <location>
        <begin position="4"/>
        <end position="10"/>
    </location>
</feature>
<feature type="helix" evidence="13">
    <location>
        <begin position="15"/>
        <end position="18"/>
    </location>
</feature>
<feature type="helix" evidence="13">
    <location>
        <begin position="32"/>
        <end position="47"/>
    </location>
</feature>
<feature type="strand" evidence="13">
    <location>
        <begin position="53"/>
        <end position="57"/>
    </location>
</feature>
<feature type="helix" evidence="13">
    <location>
        <begin position="61"/>
        <end position="74"/>
    </location>
</feature>
<feature type="strand" evidence="13">
    <location>
        <begin position="81"/>
        <end position="83"/>
    </location>
</feature>
<feature type="helix" evidence="13">
    <location>
        <begin position="85"/>
        <end position="87"/>
    </location>
</feature>
<feature type="helix" evidence="13">
    <location>
        <begin position="93"/>
        <end position="95"/>
    </location>
</feature>
<feature type="helix" evidence="13">
    <location>
        <begin position="100"/>
        <end position="107"/>
    </location>
</feature>
<feature type="helix" evidence="13">
    <location>
        <begin position="109"/>
        <end position="117"/>
    </location>
</feature>
<feature type="helix" evidence="13">
    <location>
        <begin position="134"/>
        <end position="136"/>
    </location>
</feature>
<feature type="helix" evidence="13">
    <location>
        <begin position="138"/>
        <end position="140"/>
    </location>
</feature>
<feature type="turn" evidence="13">
    <location>
        <begin position="145"/>
        <end position="147"/>
    </location>
</feature>
<feature type="helix" evidence="13">
    <location>
        <begin position="154"/>
        <end position="167"/>
    </location>
</feature>
<feature type="helix" evidence="13">
    <location>
        <begin position="169"/>
        <end position="174"/>
    </location>
</feature>
<feature type="strand" evidence="13">
    <location>
        <begin position="179"/>
        <end position="183"/>
    </location>
</feature>
<feature type="helix" evidence="13">
    <location>
        <begin position="185"/>
        <end position="195"/>
    </location>
</feature>
<feature type="helix" evidence="13">
    <location>
        <begin position="200"/>
        <end position="205"/>
    </location>
</feature>
<feature type="strand" evidence="13">
    <location>
        <begin position="214"/>
        <end position="218"/>
    </location>
</feature>
<feature type="strand" evidence="13">
    <location>
        <begin position="224"/>
        <end position="229"/>
    </location>
</feature>
<feature type="helix" evidence="13">
    <location>
        <begin position="233"/>
        <end position="239"/>
    </location>
</feature>
<evidence type="ECO:0000250" key="1">
    <source>
        <dbReference type="UniProtKB" id="Q3JWH7"/>
    </source>
</evidence>
<evidence type="ECO:0000255" key="2">
    <source>
        <dbReference type="HAMAP-Rule" id="MF_01039"/>
    </source>
</evidence>
<evidence type="ECO:0000269" key="3">
    <source>
    </source>
</evidence>
<evidence type="ECO:0000269" key="4">
    <source>
    </source>
</evidence>
<evidence type="ECO:0000269" key="5">
    <source>
    </source>
</evidence>
<evidence type="ECO:0000269" key="6">
    <source>
    </source>
</evidence>
<evidence type="ECO:0000269" key="7">
    <source>
    </source>
</evidence>
<evidence type="ECO:0000269" key="8">
    <source>
    </source>
</evidence>
<evidence type="ECO:0000269" key="9">
    <source>
    </source>
</evidence>
<evidence type="ECO:0000269" key="10">
    <source>
    </source>
</evidence>
<evidence type="ECO:0000269" key="11">
    <source ref="7"/>
</evidence>
<evidence type="ECO:0000303" key="12">
    <source>
    </source>
</evidence>
<evidence type="ECO:0007829" key="13">
    <source>
        <dbReference type="PDB" id="1E58"/>
    </source>
</evidence>
<keyword id="KW-0002">3D-structure</keyword>
<keyword id="KW-0007">Acetylation</keyword>
<keyword id="KW-0903">Direct protein sequencing</keyword>
<keyword id="KW-0312">Gluconeogenesis</keyword>
<keyword id="KW-0324">Glycolysis</keyword>
<keyword id="KW-0413">Isomerase</keyword>
<keyword id="KW-1185">Reference proteome</keyword>
<proteinExistence type="evidence at protein level"/>
<dbReference type="EC" id="5.4.2.11" evidence="2 3"/>
<dbReference type="EMBL" id="U00096">
    <property type="protein sequence ID" value="AAC73842.1"/>
    <property type="molecule type" value="Genomic_DNA"/>
</dbReference>
<dbReference type="EMBL" id="AP009048">
    <property type="protein sequence ID" value="BAA35417.1"/>
    <property type="molecule type" value="Genomic_DNA"/>
</dbReference>
<dbReference type="EMBL" id="J01591">
    <property type="status" value="NOT_ANNOTATED_CDS"/>
    <property type="molecule type" value="Genomic_DNA"/>
</dbReference>
<dbReference type="PIR" id="C64811">
    <property type="entry name" value="C64811"/>
</dbReference>
<dbReference type="RefSeq" id="NP_415276.1">
    <property type="nucleotide sequence ID" value="NC_000913.3"/>
</dbReference>
<dbReference type="RefSeq" id="WP_001295305.1">
    <property type="nucleotide sequence ID" value="NZ_STEB01000028.1"/>
</dbReference>
<dbReference type="PDB" id="1E58">
    <property type="method" value="X-ray"/>
    <property type="resolution" value="1.25 A"/>
    <property type="chains" value="A=2-250"/>
</dbReference>
<dbReference type="PDB" id="1E59">
    <property type="method" value="X-ray"/>
    <property type="resolution" value="1.30 A"/>
    <property type="chains" value="A=2-250"/>
</dbReference>
<dbReference type="PDBsum" id="1E58"/>
<dbReference type="PDBsum" id="1E59"/>
<dbReference type="SMR" id="P62707"/>
<dbReference type="BioGRID" id="4259673">
    <property type="interactions" value="21"/>
</dbReference>
<dbReference type="DIP" id="DIP-35899N"/>
<dbReference type="FunCoup" id="P62707">
    <property type="interactions" value="718"/>
</dbReference>
<dbReference type="IntAct" id="P62707">
    <property type="interactions" value="16"/>
</dbReference>
<dbReference type="STRING" id="511145.b0755"/>
<dbReference type="iPTMnet" id="P62707"/>
<dbReference type="jPOST" id="P62707"/>
<dbReference type="PaxDb" id="511145-b0755"/>
<dbReference type="EnsemblBacteria" id="AAC73842">
    <property type="protein sequence ID" value="AAC73842"/>
    <property type="gene ID" value="b0755"/>
</dbReference>
<dbReference type="GeneID" id="93776726"/>
<dbReference type="GeneID" id="945068"/>
<dbReference type="KEGG" id="ecj:JW0738"/>
<dbReference type="KEGG" id="eco:b0755"/>
<dbReference type="KEGG" id="ecoc:C3026_03820"/>
<dbReference type="PATRIC" id="fig|1411691.4.peg.1524"/>
<dbReference type="EchoBASE" id="EB1650"/>
<dbReference type="eggNOG" id="COG0588">
    <property type="taxonomic scope" value="Bacteria"/>
</dbReference>
<dbReference type="HOGENOM" id="CLU_033323_1_1_6"/>
<dbReference type="InParanoid" id="P62707"/>
<dbReference type="OMA" id="MLPYWYD"/>
<dbReference type="OrthoDB" id="9781415at2"/>
<dbReference type="PhylomeDB" id="P62707"/>
<dbReference type="BioCyc" id="EcoCyc:GPMA-MONOMER"/>
<dbReference type="BioCyc" id="MetaCyc:GPMA-MONOMER"/>
<dbReference type="SABIO-RK" id="P62707"/>
<dbReference type="UniPathway" id="UPA00109">
    <property type="reaction ID" value="UER00186"/>
</dbReference>
<dbReference type="EvolutionaryTrace" id="P62707"/>
<dbReference type="PRO" id="PR:P62707"/>
<dbReference type="Proteomes" id="UP000000625">
    <property type="component" value="Chromosome"/>
</dbReference>
<dbReference type="GO" id="GO:0005737">
    <property type="term" value="C:cytoplasm"/>
    <property type="evidence" value="ECO:0007005"/>
    <property type="project" value="UniProtKB"/>
</dbReference>
<dbReference type="GO" id="GO:0005829">
    <property type="term" value="C:cytosol"/>
    <property type="evidence" value="ECO:0000314"/>
    <property type="project" value="EcoCyc"/>
</dbReference>
<dbReference type="GO" id="GO:0005524">
    <property type="term" value="F:ATP binding"/>
    <property type="evidence" value="ECO:0000314"/>
    <property type="project" value="EcoCyc"/>
</dbReference>
<dbReference type="GO" id="GO:0097216">
    <property type="term" value="F:guanosine tetraphosphate binding"/>
    <property type="evidence" value="ECO:0000314"/>
    <property type="project" value="EcoCyc"/>
</dbReference>
<dbReference type="GO" id="GO:0004619">
    <property type="term" value="F:phosphoglycerate mutase activity"/>
    <property type="evidence" value="ECO:0007669"/>
    <property type="project" value="UniProtKB-EC"/>
</dbReference>
<dbReference type="GO" id="GO:0042803">
    <property type="term" value="F:protein homodimerization activity"/>
    <property type="evidence" value="ECO:0000314"/>
    <property type="project" value="EcoCyc"/>
</dbReference>
<dbReference type="GO" id="GO:0061621">
    <property type="term" value="P:canonical glycolysis"/>
    <property type="evidence" value="ECO:0000316"/>
    <property type="project" value="EcoCyc"/>
</dbReference>
<dbReference type="GO" id="GO:0006094">
    <property type="term" value="P:gluconeogenesis"/>
    <property type="evidence" value="ECO:0007669"/>
    <property type="project" value="UniProtKB-UniRule"/>
</dbReference>
<dbReference type="CDD" id="cd07067">
    <property type="entry name" value="HP_PGM_like"/>
    <property type="match status" value="1"/>
</dbReference>
<dbReference type="FunFam" id="3.40.50.1240:FF:000003">
    <property type="entry name" value="2,3-bisphosphoglycerate-dependent phosphoglycerate mutase"/>
    <property type="match status" value="1"/>
</dbReference>
<dbReference type="Gene3D" id="3.40.50.1240">
    <property type="entry name" value="Phosphoglycerate mutase-like"/>
    <property type="match status" value="1"/>
</dbReference>
<dbReference type="HAMAP" id="MF_01039">
    <property type="entry name" value="PGAM_GpmA"/>
    <property type="match status" value="1"/>
</dbReference>
<dbReference type="InterPro" id="IPR013078">
    <property type="entry name" value="His_Pase_superF_clade-1"/>
</dbReference>
<dbReference type="InterPro" id="IPR029033">
    <property type="entry name" value="His_PPase_superfam"/>
</dbReference>
<dbReference type="InterPro" id="IPR001345">
    <property type="entry name" value="PG/BPGM_mutase_AS"/>
</dbReference>
<dbReference type="InterPro" id="IPR005952">
    <property type="entry name" value="Phosphogly_mut1"/>
</dbReference>
<dbReference type="NCBIfam" id="TIGR01258">
    <property type="entry name" value="pgm_1"/>
    <property type="match status" value="1"/>
</dbReference>
<dbReference type="NCBIfam" id="NF010713">
    <property type="entry name" value="PRK14115.1"/>
    <property type="match status" value="1"/>
</dbReference>
<dbReference type="PANTHER" id="PTHR11931">
    <property type="entry name" value="PHOSPHOGLYCERATE MUTASE"/>
    <property type="match status" value="1"/>
</dbReference>
<dbReference type="Pfam" id="PF00300">
    <property type="entry name" value="His_Phos_1"/>
    <property type="match status" value="1"/>
</dbReference>
<dbReference type="PIRSF" id="PIRSF000709">
    <property type="entry name" value="6PFK_2-Ptase"/>
    <property type="match status" value="1"/>
</dbReference>
<dbReference type="SMART" id="SM00855">
    <property type="entry name" value="PGAM"/>
    <property type="match status" value="1"/>
</dbReference>
<dbReference type="SUPFAM" id="SSF53254">
    <property type="entry name" value="Phosphoglycerate mutase-like"/>
    <property type="match status" value="1"/>
</dbReference>
<dbReference type="PROSITE" id="PS00175">
    <property type="entry name" value="PG_MUTASE"/>
    <property type="match status" value="1"/>
</dbReference>
<gene>
    <name evidence="2" type="primary">gpmA</name>
    <name type="synonym">gpm</name>
    <name type="synonym">pgm</name>
    <name type="synonym">pgmA</name>
    <name type="ordered locus">b0755</name>
    <name type="ordered locus">JW0738</name>
</gene>
<accession>P62707</accession>
<accession>P31217</accession>
<organism>
    <name type="scientific">Escherichia coli (strain K12)</name>
    <dbReference type="NCBI Taxonomy" id="83333"/>
    <lineage>
        <taxon>Bacteria</taxon>
        <taxon>Pseudomonadati</taxon>
        <taxon>Pseudomonadota</taxon>
        <taxon>Gammaproteobacteria</taxon>
        <taxon>Enterobacterales</taxon>
        <taxon>Enterobacteriaceae</taxon>
        <taxon>Escherichia</taxon>
    </lineage>
</organism>
<protein>
    <recommendedName>
        <fullName evidence="2 12">2,3-bisphosphoglycerate-dependent phosphoglycerate mutase</fullName>
        <shortName evidence="2 12">BPG-dependent PGAM</shortName>
        <shortName evidence="2 12">PGAM</shortName>
        <shortName evidence="2 12">Phosphoglyceromutase</shortName>
        <shortName evidence="2 12">dPGM</shortName>
        <ecNumber evidence="2 3">5.4.2.11</ecNumber>
    </recommendedName>
</protein>
<name>GPMA_ECOLI</name>
<comment type="function">
    <text evidence="2 3">Catalyzes the interconversion of 2-phosphoglycerate and 3-phosphoglycerate.</text>
</comment>
<comment type="catalytic activity">
    <reaction evidence="2 3">
        <text>(2R)-2-phosphoglycerate = (2R)-3-phosphoglycerate</text>
        <dbReference type="Rhea" id="RHEA:15901"/>
        <dbReference type="ChEBI" id="CHEBI:58272"/>
        <dbReference type="ChEBI" id="CHEBI:58289"/>
        <dbReference type="EC" id="5.4.2.11"/>
    </reaction>
</comment>
<comment type="activity regulation">
    <text evidence="3">Strongly inhibited by vanadate.</text>
</comment>
<comment type="biophysicochemical properties">
    <kinetics>
        <KM evidence="3">190 uM for 2-PGA (at pH 7 and 30 degrees Celsius)</KM>
        <KM evidence="3">200 uM for 3-PGA (at pH 7 and 30 degrees Celsius)</KM>
        <text evidence="3">kcat is 330 sec(-1) for mutase with 3-PGA as substrate (at pH 7 and 30 degrees Celsius). kcat is 220 sec(-1) for mutase with 2-PGA as substrate (at pH 7 and 30 degrees Celsius).</text>
    </kinetics>
</comment>
<comment type="pathway">
    <text evidence="2">Carbohydrate degradation; glycolysis; pyruvate from D-glyceraldehyde 3-phosphate: step 3/5.</text>
</comment>
<comment type="subunit">
    <text evidence="2 3 4 6">Homodimer.</text>
</comment>
<comment type="developmental stage">
    <text evidence="3">Peak expression observed in mid to late log phase.</text>
</comment>
<comment type="induction">
    <text evidence="5">Regulated by the Fur protein.</text>
</comment>
<comment type="miscellaneous">
    <text evidence="3">Has a 10-fold higher specific activity than BPG-independent phosphoglycerate mutase.</text>
</comment>
<comment type="miscellaneous">
    <text evidence="3">Inhibition by vanadate is a diagnostic test for discrimination between the cofactor-dependent (GpmA) and -independent (GpmI) phosphoglycerate mutases.</text>
</comment>
<comment type="similarity">
    <text evidence="2">Belongs to the phosphoglycerate mutase family. BPG-dependent PGAM subfamily.</text>
</comment>
<sequence>MAVTKLVLVRHGESQWNKENRFTGWYDVDLSEKGVSEAKAAGKLLKEEGYSFDFAYTSVLKRAIHTLWNVLDELDQAWLPVEKSWKLNERHYGALQGLNKAETAEKYGDEQVKQWRRGFAVTPPELTKDDERYPGHDPRYAKLSEKELPLTESLALTIDRVIPYWNETILPRMKSGERVIIAAHGNSLRALVKYLDNMSEEEILELNIPTGVPLVYEFDENFKPLKRYYLGNADEIAAKAAAVANQGKAK</sequence>